<evidence type="ECO:0000250" key="1">
    <source>
        <dbReference type="UniProtKB" id="P01040"/>
    </source>
</evidence>
<evidence type="ECO:0000255" key="2"/>
<evidence type="ECO:0000256" key="3">
    <source>
        <dbReference type="SAM" id="MobiDB-lite"/>
    </source>
</evidence>
<evidence type="ECO:0000269" key="4">
    <source>
    </source>
</evidence>
<evidence type="ECO:0000303" key="5">
    <source>
    </source>
</evidence>
<evidence type="ECO:0000305" key="6"/>
<evidence type="ECO:0000305" key="7">
    <source>
    </source>
</evidence>
<name>EPIC4_PHYIT</name>
<comment type="function">
    <text evidence="7">Secreted effector that interacts with and inhibits host apoplastic pathogenesis-related papain-like cysteine proteases (Probable). Inhibition of host proteases by a pathogen extracellular protease inhibitor forms a specific type of defense-counterdefense mechanism between plants and microbial pathogens (Probable).</text>
</comment>
<comment type="subcellular location">
    <subcellularLocation>
        <location evidence="7">Secreted</location>
    </subcellularLocation>
    <text evidence="7">Localizes to host apoplast where it targets defense proteases for inhibition.</text>
</comment>
<comment type="induction">
    <text evidence="4">Expressed during infection of host plant and non-sporulating growth, upon nitrogen starvation, in mating culture, in mycelium as well as in ungerminated sporangia.</text>
</comment>
<comment type="similarity">
    <text evidence="6">Belongs to the cystatin family.</text>
</comment>
<gene>
    <name evidence="5" type="primary">EPIC4</name>
    <name type="ORF">PITG_00058</name>
</gene>
<reference key="1">
    <citation type="journal article" date="2009" name="Nature">
        <title>Genome sequence and analysis of the Irish potato famine pathogen Phytophthora infestans.</title>
        <authorList>
            <consortium name="The Broad Institute Genome Sequencing Platform"/>
            <person name="Haas B.J."/>
            <person name="Kamoun S."/>
            <person name="Zody M.C."/>
            <person name="Jiang R.H."/>
            <person name="Handsaker R.E."/>
            <person name="Cano L.M."/>
            <person name="Grabherr M."/>
            <person name="Kodira C.D."/>
            <person name="Raffaele S."/>
            <person name="Torto-Alalibo T."/>
            <person name="Bozkurt T.O."/>
            <person name="Ah-Fong A.M."/>
            <person name="Alvarado L."/>
            <person name="Anderson V.L."/>
            <person name="Armstrong M.R."/>
            <person name="Avrova A."/>
            <person name="Baxter L."/>
            <person name="Beynon J."/>
            <person name="Boevink P.C."/>
            <person name="Bollmann S.R."/>
            <person name="Bos J.I."/>
            <person name="Bulone V."/>
            <person name="Cai G."/>
            <person name="Cakir C."/>
            <person name="Carrington J.C."/>
            <person name="Chawner M."/>
            <person name="Conti L."/>
            <person name="Costanzo S."/>
            <person name="Ewan R."/>
            <person name="Fahlgren N."/>
            <person name="Fischbach M.A."/>
            <person name="Fugelstad J."/>
            <person name="Gilroy E.M."/>
            <person name="Gnerre S."/>
            <person name="Green P.J."/>
            <person name="Grenville-Briggs L.J."/>
            <person name="Griffith J."/>
            <person name="Grunwald N.J."/>
            <person name="Horn K."/>
            <person name="Horner N.R."/>
            <person name="Hu C.H."/>
            <person name="Huitema E."/>
            <person name="Jeong D.H."/>
            <person name="Jones A.M."/>
            <person name="Jones J.D."/>
            <person name="Jones R.W."/>
            <person name="Karlsson E.K."/>
            <person name="Kunjeti S.G."/>
            <person name="Lamour K."/>
            <person name="Liu Z."/>
            <person name="Ma L."/>
            <person name="Maclean D."/>
            <person name="Chibucos M.C."/>
            <person name="McDonald H."/>
            <person name="McWalters J."/>
            <person name="Meijer H.J."/>
            <person name="Morgan W."/>
            <person name="Morris P.F."/>
            <person name="Munro C.A."/>
            <person name="O'Neill K."/>
            <person name="Ospina-Giraldo M."/>
            <person name="Pinzon A."/>
            <person name="Pritchard L."/>
            <person name="Ramsahoye B."/>
            <person name="Ren Q."/>
            <person name="Restrepo S."/>
            <person name="Roy S."/>
            <person name="Sadanandom A."/>
            <person name="Savidor A."/>
            <person name="Schornack S."/>
            <person name="Schwartz D.C."/>
            <person name="Schumann U.D."/>
            <person name="Schwessinger B."/>
            <person name="Seyer L."/>
            <person name="Sharpe T."/>
            <person name="Silvar C."/>
            <person name="Song J."/>
            <person name="Studholme D.J."/>
            <person name="Sykes S."/>
            <person name="Thines M."/>
            <person name="van de Vondervoort P.J."/>
            <person name="Phuntumart V."/>
            <person name="Wawra S."/>
            <person name="Weide R."/>
            <person name="Win J."/>
            <person name="Young C."/>
            <person name="Zhou S."/>
            <person name="Fry W."/>
            <person name="Meyers B.C."/>
            <person name="van West P."/>
            <person name="Ristaino J."/>
            <person name="Govers F."/>
            <person name="Birch P.R."/>
            <person name="Whisson S.C."/>
            <person name="Judelson H.S."/>
            <person name="Nusbaum C."/>
        </authorList>
    </citation>
    <scope>NUCLEOTIDE SEQUENCE [LARGE SCALE GENOMIC DNA]</scope>
    <source>
        <strain>T30-4</strain>
    </source>
</reference>
<reference key="2">
    <citation type="journal article" date="2007" name="Plant Physiol.">
        <title>A Phytophthora infestans cystatin-like protein targets a novel tomato papain-like apoplastic protease.</title>
        <authorList>
            <person name="Tian M."/>
            <person name="Win J."/>
            <person name="Song J."/>
            <person name="van der Hoorn R."/>
            <person name="van der Knaap E."/>
            <person name="Kamoun S."/>
        </authorList>
    </citation>
    <scope>IDENTIFICATION</scope>
    <scope>INDUCTION</scope>
</reference>
<proteinExistence type="evidence at transcript level"/>
<accession>D0MSS2</accession>
<organism>
    <name type="scientific">Phytophthora infestans (strain T30-4)</name>
    <name type="common">Potato late blight agent</name>
    <dbReference type="NCBI Taxonomy" id="403677"/>
    <lineage>
        <taxon>Eukaryota</taxon>
        <taxon>Sar</taxon>
        <taxon>Stramenopiles</taxon>
        <taxon>Oomycota</taxon>
        <taxon>Peronosporales</taxon>
        <taxon>Peronosporaceae</taxon>
        <taxon>Phytophthora</taxon>
    </lineage>
</organism>
<protein>
    <recommendedName>
        <fullName evidence="5">Cystatin-like cysteine protease inhibitor EPIC4</fullName>
    </recommendedName>
    <alternativeName>
        <fullName evidence="5">Extracellular protease inhibitor with cystatin-like domain protein 4</fullName>
    </alternativeName>
    <alternativeName>
        <fullName evidence="5">Secreted effector EPIC4</fullName>
    </alternativeName>
</protein>
<feature type="signal peptide" evidence="2">
    <location>
        <begin position="1"/>
        <end position="17"/>
    </location>
</feature>
<feature type="chain" id="PRO_5003012437" description="Cystatin-like cysteine protease inhibitor EPIC4">
    <location>
        <begin position="18"/>
        <end position="172"/>
    </location>
</feature>
<feature type="region of interest" description="Disordered" evidence="3">
    <location>
        <begin position="129"/>
        <end position="172"/>
    </location>
</feature>
<feature type="short sequence motif" description="Secondary area of contact" evidence="1">
    <location>
        <begin position="71"/>
        <end position="75"/>
    </location>
</feature>
<feature type="compositionally biased region" description="Low complexity" evidence="3">
    <location>
        <begin position="130"/>
        <end position="156"/>
    </location>
</feature>
<feature type="compositionally biased region" description="Polar residues" evidence="3">
    <location>
        <begin position="157"/>
        <end position="166"/>
    </location>
</feature>
<feature type="site" description="Reactive site" evidence="1">
    <location>
        <position position="27"/>
    </location>
</feature>
<keyword id="KW-0646">Protease inhibitor</keyword>
<keyword id="KW-1185">Reference proteome</keyword>
<keyword id="KW-0964">Secreted</keyword>
<keyword id="KW-0732">Signal</keyword>
<keyword id="KW-0789">Thiol protease inhibitor</keyword>
<keyword id="KW-0843">Virulence</keyword>
<sequence>MRASLSILVAFPALAAARDVVTIGMTGSWHPADVTEDNTKLLGTALSGSSFSKSVGDKRVCYSEVTSLETQVVAGTNYRFHISGCDVTDSDGECSTSALSSCELSGFVVQIFEQSWTNTLKVTNIKAEEAATASSSSTPAPTPASTSTSASSSEETMLQSSVQQRAMFSDFV</sequence>
<dbReference type="EMBL" id="DS028118">
    <property type="protein sequence ID" value="EEY57506.1"/>
    <property type="molecule type" value="Genomic_DNA"/>
</dbReference>
<dbReference type="RefSeq" id="XP_002908692.1">
    <property type="nucleotide sequence ID" value="XM_002908646.1"/>
</dbReference>
<dbReference type="SMR" id="D0MSS2"/>
<dbReference type="STRING" id="403677.D0MSS2"/>
<dbReference type="EnsemblProtists" id="PITG_00058T0">
    <property type="protein sequence ID" value="PITG_00058T0"/>
    <property type="gene ID" value="PITG_00058"/>
</dbReference>
<dbReference type="GeneID" id="9476578"/>
<dbReference type="KEGG" id="pif:PITG_00058"/>
<dbReference type="VEuPathDB" id="FungiDB:PITG_00058"/>
<dbReference type="eggNOG" id="ENOG502S15D">
    <property type="taxonomic scope" value="Eukaryota"/>
</dbReference>
<dbReference type="HOGENOM" id="CLU_117422_0_0_1"/>
<dbReference type="InParanoid" id="D0MSS2"/>
<dbReference type="OMA" id="CAPTEYV"/>
<dbReference type="OrthoDB" id="2016588at2759"/>
<dbReference type="Proteomes" id="UP000006643">
    <property type="component" value="Partially assembled WGS sequence"/>
</dbReference>
<dbReference type="GO" id="GO:0005576">
    <property type="term" value="C:extracellular region"/>
    <property type="evidence" value="ECO:0007669"/>
    <property type="project" value="UniProtKB-SubCell"/>
</dbReference>
<dbReference type="GO" id="GO:0004869">
    <property type="term" value="F:cysteine-type endopeptidase inhibitor activity"/>
    <property type="evidence" value="ECO:0007669"/>
    <property type="project" value="UniProtKB-KW"/>
</dbReference>
<dbReference type="GO" id="GO:0030414">
    <property type="term" value="F:peptidase inhibitor activity"/>
    <property type="evidence" value="ECO:0000250"/>
    <property type="project" value="UniProtKB"/>
</dbReference>
<dbReference type="CDD" id="cd00042">
    <property type="entry name" value="CY"/>
    <property type="match status" value="1"/>
</dbReference>
<dbReference type="Gene3D" id="3.10.450.10">
    <property type="match status" value="1"/>
</dbReference>
<dbReference type="InterPro" id="IPR000010">
    <property type="entry name" value="Cystatin_dom"/>
</dbReference>
<dbReference type="InterPro" id="IPR046350">
    <property type="entry name" value="Cystatin_sf"/>
</dbReference>
<dbReference type="SUPFAM" id="SSF54403">
    <property type="entry name" value="Cystatin/monellin"/>
    <property type="match status" value="1"/>
</dbReference>
<dbReference type="PROSITE" id="PS00287">
    <property type="entry name" value="CYSTATIN"/>
    <property type="match status" value="1"/>
</dbReference>